<dbReference type="EMBL" id="AY081774">
    <property type="protein sequence ID" value="AAN02288.1"/>
    <property type="status" value="ALT_FRAME"/>
    <property type="molecule type" value="mRNA"/>
</dbReference>
<dbReference type="EMBL" id="AK042320">
    <property type="protein sequence ID" value="BAC31222.1"/>
    <property type="molecule type" value="mRNA"/>
</dbReference>
<dbReference type="EMBL" id="AK046822">
    <property type="protein sequence ID" value="BAC32884.1"/>
    <property type="molecule type" value="mRNA"/>
</dbReference>
<dbReference type="EMBL" id="BC051645">
    <property type="protein sequence ID" value="AAH51645.1"/>
    <property type="molecule type" value="mRNA"/>
</dbReference>
<dbReference type="EMBL" id="BC059215">
    <property type="protein sequence ID" value="AAH59215.1"/>
    <property type="molecule type" value="mRNA"/>
</dbReference>
<dbReference type="EMBL" id="BC108416">
    <property type="protein sequence ID" value="AAI08417.1"/>
    <property type="molecule type" value="mRNA"/>
</dbReference>
<dbReference type="RefSeq" id="NP_001091092.1">
    <molecule id="Q8BXJ2-2"/>
    <property type="nucleotide sequence ID" value="NM_001097623.2"/>
</dbReference>
<dbReference type="RefSeq" id="NP_001419744.1">
    <molecule id="Q8BXJ2-2"/>
    <property type="nucleotide sequence ID" value="NM_001432815.1"/>
</dbReference>
<dbReference type="RefSeq" id="NP_001419745.1">
    <molecule id="Q8BXJ2-1"/>
    <property type="nucleotide sequence ID" value="NM_001432816.1"/>
</dbReference>
<dbReference type="RefSeq" id="NP_766210.1">
    <molecule id="Q8BXJ2-1"/>
    <property type="nucleotide sequence ID" value="NM_172622.4"/>
</dbReference>
<dbReference type="SMR" id="Q8BXJ2"/>
<dbReference type="BioGRID" id="230328">
    <property type="interactions" value="4"/>
</dbReference>
<dbReference type="FunCoup" id="Q8BXJ2">
    <property type="interactions" value="1981"/>
</dbReference>
<dbReference type="IntAct" id="Q8BXJ2">
    <property type="interactions" value="2"/>
</dbReference>
<dbReference type="GlyGen" id="Q8BXJ2">
    <property type="glycosylation" value="2 sites"/>
</dbReference>
<dbReference type="iPTMnet" id="Q8BXJ2"/>
<dbReference type="PhosphoSitePlus" id="Q8BXJ2"/>
<dbReference type="jPOST" id="Q8BXJ2"/>
<dbReference type="PeptideAtlas" id="Q8BXJ2"/>
<dbReference type="ProteomicsDB" id="258965">
    <molecule id="Q8BXJ2-1"/>
</dbReference>
<dbReference type="ProteomicsDB" id="258966">
    <molecule id="Q8BXJ2-2"/>
</dbReference>
<dbReference type="ProteomicsDB" id="258967">
    <molecule id="Q8BXJ2-3"/>
</dbReference>
<dbReference type="ProteomicsDB" id="258968">
    <molecule id="Q8BXJ2-4"/>
</dbReference>
<dbReference type="Pumba" id="Q8BXJ2"/>
<dbReference type="DNASU" id="224829"/>
<dbReference type="Ensembl" id="ENSMUST00000190020.4">
    <molecule id="Q8BXJ2-4"/>
    <property type="protein sequence ID" value="ENSMUSP00000159411.2"/>
    <property type="gene ID" value="ENSMUSG00000064043.16"/>
</dbReference>
<dbReference type="Ensembl" id="ENSMUST00000190080.9">
    <molecule id="Q8BXJ2-2"/>
    <property type="protein sequence ID" value="ENSMUSP00000159410.2"/>
    <property type="gene ID" value="ENSMUSG00000064043.16"/>
</dbReference>
<dbReference type="GeneID" id="224829"/>
<dbReference type="KEGG" id="mmu:224829"/>
<dbReference type="UCSC" id="uc008cur.1">
    <molecule id="Q8BXJ2-1"/>
    <property type="organism name" value="mouse"/>
</dbReference>
<dbReference type="UCSC" id="uc008cus.1">
    <molecule id="Q8BXJ2-2"/>
    <property type="organism name" value="mouse"/>
</dbReference>
<dbReference type="UCSC" id="uc008cut.1">
    <molecule id="Q8BXJ2-3"/>
    <property type="organism name" value="mouse"/>
</dbReference>
<dbReference type="UCSC" id="uc008cuw.1">
    <molecule id="Q8BXJ2-4"/>
    <property type="organism name" value="mouse"/>
</dbReference>
<dbReference type="AGR" id="MGI:2442086"/>
<dbReference type="CTD" id="55809"/>
<dbReference type="MGI" id="MGI:2442086">
    <property type="gene designation" value="Trerf1"/>
</dbReference>
<dbReference type="GeneTree" id="ENSGT00940000160303"/>
<dbReference type="InParanoid" id="Q8BXJ2"/>
<dbReference type="OMA" id="IIEDCMT"/>
<dbReference type="OrthoDB" id="85980at9989"/>
<dbReference type="PhylomeDB" id="Q8BXJ2"/>
<dbReference type="TreeFam" id="TF106431"/>
<dbReference type="BioGRID-ORCS" id="224829">
    <property type="hits" value="3 hits in 24 CRISPR screens"/>
</dbReference>
<dbReference type="ChiTaRS" id="Trerf1">
    <property type="organism name" value="mouse"/>
</dbReference>
<dbReference type="PRO" id="PR:Q8BXJ2"/>
<dbReference type="Proteomes" id="UP000000589">
    <property type="component" value="Chromosome 17"/>
</dbReference>
<dbReference type="RNAct" id="Q8BXJ2">
    <property type="molecule type" value="protein"/>
</dbReference>
<dbReference type="Bgee" id="ENSMUSG00000064043">
    <property type="expression patterns" value="Expressed in rostral migratory stream and 249 other cell types or tissues"/>
</dbReference>
<dbReference type="GO" id="GO:0005634">
    <property type="term" value="C:nucleus"/>
    <property type="evidence" value="ECO:0007669"/>
    <property type="project" value="UniProtKB-SubCell"/>
</dbReference>
<dbReference type="GO" id="GO:0003677">
    <property type="term" value="F:DNA binding"/>
    <property type="evidence" value="ECO:0007669"/>
    <property type="project" value="UniProtKB-KW"/>
</dbReference>
<dbReference type="GO" id="GO:0008270">
    <property type="term" value="F:zinc ion binding"/>
    <property type="evidence" value="ECO:0007669"/>
    <property type="project" value="UniProtKB-KW"/>
</dbReference>
<dbReference type="FunFam" id="1.10.10.60:FF:000086">
    <property type="entry name" value="transcriptional-regulating factor 1 isoform X1"/>
    <property type="match status" value="1"/>
</dbReference>
<dbReference type="Gene3D" id="3.30.160.60">
    <property type="entry name" value="Classic Zinc Finger"/>
    <property type="match status" value="1"/>
</dbReference>
<dbReference type="Gene3D" id="1.10.10.60">
    <property type="entry name" value="Homeodomain-like"/>
    <property type="match status" value="1"/>
</dbReference>
<dbReference type="InterPro" id="IPR000949">
    <property type="entry name" value="ELM2_dom"/>
</dbReference>
<dbReference type="InterPro" id="IPR009057">
    <property type="entry name" value="Homeodomain-like_sf"/>
</dbReference>
<dbReference type="InterPro" id="IPR001005">
    <property type="entry name" value="SANT/Myb"/>
</dbReference>
<dbReference type="InterPro" id="IPR017884">
    <property type="entry name" value="SANT_dom"/>
</dbReference>
<dbReference type="InterPro" id="IPR051066">
    <property type="entry name" value="Trans_reg/Corepressor"/>
</dbReference>
<dbReference type="InterPro" id="IPR036236">
    <property type="entry name" value="Znf_C2H2_sf"/>
</dbReference>
<dbReference type="InterPro" id="IPR013087">
    <property type="entry name" value="Znf_C2H2_type"/>
</dbReference>
<dbReference type="PANTHER" id="PTHR16089">
    <property type="entry name" value="REST COREPRESSOR COREST PROTEIN-RELATED"/>
    <property type="match status" value="1"/>
</dbReference>
<dbReference type="PANTHER" id="PTHR16089:SF19">
    <property type="entry name" value="TRANSCRIPTIONAL-REGULATING FACTOR 1"/>
    <property type="match status" value="1"/>
</dbReference>
<dbReference type="Pfam" id="PF01448">
    <property type="entry name" value="ELM2"/>
    <property type="match status" value="1"/>
</dbReference>
<dbReference type="Pfam" id="PF13912">
    <property type="entry name" value="zf-C2H2_6"/>
    <property type="match status" value="3"/>
</dbReference>
<dbReference type="SMART" id="SM01189">
    <property type="entry name" value="ELM2"/>
    <property type="match status" value="1"/>
</dbReference>
<dbReference type="SMART" id="SM00717">
    <property type="entry name" value="SANT"/>
    <property type="match status" value="1"/>
</dbReference>
<dbReference type="SMART" id="SM00355">
    <property type="entry name" value="ZnF_C2H2"/>
    <property type="match status" value="3"/>
</dbReference>
<dbReference type="SUPFAM" id="SSF57667">
    <property type="entry name" value="beta-beta-alpha zinc fingers"/>
    <property type="match status" value="1"/>
</dbReference>
<dbReference type="SUPFAM" id="SSF46689">
    <property type="entry name" value="Homeodomain-like"/>
    <property type="match status" value="1"/>
</dbReference>
<dbReference type="PROSITE" id="PS51156">
    <property type="entry name" value="ELM2"/>
    <property type="match status" value="1"/>
</dbReference>
<dbReference type="PROSITE" id="PS51293">
    <property type="entry name" value="SANT"/>
    <property type="match status" value="1"/>
</dbReference>
<dbReference type="PROSITE" id="PS00028">
    <property type="entry name" value="ZINC_FINGER_C2H2_1"/>
    <property type="match status" value="3"/>
</dbReference>
<dbReference type="PROSITE" id="PS50157">
    <property type="entry name" value="ZINC_FINGER_C2H2_2"/>
    <property type="match status" value="3"/>
</dbReference>
<name>TREF1_MOUSE</name>
<reference key="1">
    <citation type="journal article" date="2003" name="Mol. Psychiatry">
        <title>Cloning of murine TReP-132, a novel transcription factor expressed in brain regions involved in behavioral and psychiatric disorders.</title>
        <authorList>
            <person name="Duguay Y."/>
            <person name="Lapointe A."/>
            <person name="Lavallee B."/>
            <person name="Hum D.W."/>
            <person name="Rivest S."/>
        </authorList>
    </citation>
    <scope>NUCLEOTIDE SEQUENCE [MRNA] (ISOFORM 4)</scope>
    <scope>TISSUE SPECIFICITY</scope>
    <scope>DEVELOPMENTAL STAGE</scope>
</reference>
<reference key="2">
    <citation type="journal article" date="2005" name="Science">
        <title>The transcriptional landscape of the mammalian genome.</title>
        <authorList>
            <person name="Carninci P."/>
            <person name="Kasukawa T."/>
            <person name="Katayama S."/>
            <person name="Gough J."/>
            <person name="Frith M.C."/>
            <person name="Maeda N."/>
            <person name="Oyama R."/>
            <person name="Ravasi T."/>
            <person name="Lenhard B."/>
            <person name="Wells C."/>
            <person name="Kodzius R."/>
            <person name="Shimokawa K."/>
            <person name="Bajic V.B."/>
            <person name="Brenner S.E."/>
            <person name="Batalov S."/>
            <person name="Forrest A.R."/>
            <person name="Zavolan M."/>
            <person name="Davis M.J."/>
            <person name="Wilming L.G."/>
            <person name="Aidinis V."/>
            <person name="Allen J.E."/>
            <person name="Ambesi-Impiombato A."/>
            <person name="Apweiler R."/>
            <person name="Aturaliya R.N."/>
            <person name="Bailey T.L."/>
            <person name="Bansal M."/>
            <person name="Baxter L."/>
            <person name="Beisel K.W."/>
            <person name="Bersano T."/>
            <person name="Bono H."/>
            <person name="Chalk A.M."/>
            <person name="Chiu K.P."/>
            <person name="Choudhary V."/>
            <person name="Christoffels A."/>
            <person name="Clutterbuck D.R."/>
            <person name="Crowe M.L."/>
            <person name="Dalla E."/>
            <person name="Dalrymple B.P."/>
            <person name="de Bono B."/>
            <person name="Della Gatta G."/>
            <person name="di Bernardo D."/>
            <person name="Down T."/>
            <person name="Engstrom P."/>
            <person name="Fagiolini M."/>
            <person name="Faulkner G."/>
            <person name="Fletcher C.F."/>
            <person name="Fukushima T."/>
            <person name="Furuno M."/>
            <person name="Futaki S."/>
            <person name="Gariboldi M."/>
            <person name="Georgii-Hemming P."/>
            <person name="Gingeras T.R."/>
            <person name="Gojobori T."/>
            <person name="Green R.E."/>
            <person name="Gustincich S."/>
            <person name="Harbers M."/>
            <person name="Hayashi Y."/>
            <person name="Hensch T.K."/>
            <person name="Hirokawa N."/>
            <person name="Hill D."/>
            <person name="Huminiecki L."/>
            <person name="Iacono M."/>
            <person name="Ikeo K."/>
            <person name="Iwama A."/>
            <person name="Ishikawa T."/>
            <person name="Jakt M."/>
            <person name="Kanapin A."/>
            <person name="Katoh M."/>
            <person name="Kawasawa Y."/>
            <person name="Kelso J."/>
            <person name="Kitamura H."/>
            <person name="Kitano H."/>
            <person name="Kollias G."/>
            <person name="Krishnan S.P."/>
            <person name="Kruger A."/>
            <person name="Kummerfeld S.K."/>
            <person name="Kurochkin I.V."/>
            <person name="Lareau L.F."/>
            <person name="Lazarevic D."/>
            <person name="Lipovich L."/>
            <person name="Liu J."/>
            <person name="Liuni S."/>
            <person name="McWilliam S."/>
            <person name="Madan Babu M."/>
            <person name="Madera M."/>
            <person name="Marchionni L."/>
            <person name="Matsuda H."/>
            <person name="Matsuzawa S."/>
            <person name="Miki H."/>
            <person name="Mignone F."/>
            <person name="Miyake S."/>
            <person name="Morris K."/>
            <person name="Mottagui-Tabar S."/>
            <person name="Mulder N."/>
            <person name="Nakano N."/>
            <person name="Nakauchi H."/>
            <person name="Ng P."/>
            <person name="Nilsson R."/>
            <person name="Nishiguchi S."/>
            <person name="Nishikawa S."/>
            <person name="Nori F."/>
            <person name="Ohara O."/>
            <person name="Okazaki Y."/>
            <person name="Orlando V."/>
            <person name="Pang K.C."/>
            <person name="Pavan W.J."/>
            <person name="Pavesi G."/>
            <person name="Pesole G."/>
            <person name="Petrovsky N."/>
            <person name="Piazza S."/>
            <person name="Reed J."/>
            <person name="Reid J.F."/>
            <person name="Ring B.Z."/>
            <person name="Ringwald M."/>
            <person name="Rost B."/>
            <person name="Ruan Y."/>
            <person name="Salzberg S.L."/>
            <person name="Sandelin A."/>
            <person name="Schneider C."/>
            <person name="Schoenbach C."/>
            <person name="Sekiguchi K."/>
            <person name="Semple C.A."/>
            <person name="Seno S."/>
            <person name="Sessa L."/>
            <person name="Sheng Y."/>
            <person name="Shibata Y."/>
            <person name="Shimada H."/>
            <person name="Shimada K."/>
            <person name="Silva D."/>
            <person name="Sinclair B."/>
            <person name="Sperling S."/>
            <person name="Stupka E."/>
            <person name="Sugiura K."/>
            <person name="Sultana R."/>
            <person name="Takenaka Y."/>
            <person name="Taki K."/>
            <person name="Tammoja K."/>
            <person name="Tan S.L."/>
            <person name="Tang S."/>
            <person name="Taylor M.S."/>
            <person name="Tegner J."/>
            <person name="Teichmann S.A."/>
            <person name="Ueda H.R."/>
            <person name="van Nimwegen E."/>
            <person name="Verardo R."/>
            <person name="Wei C.L."/>
            <person name="Yagi K."/>
            <person name="Yamanishi H."/>
            <person name="Zabarovsky E."/>
            <person name="Zhu S."/>
            <person name="Zimmer A."/>
            <person name="Hide W."/>
            <person name="Bult C."/>
            <person name="Grimmond S.M."/>
            <person name="Teasdale R.D."/>
            <person name="Liu E.T."/>
            <person name="Brusic V."/>
            <person name="Quackenbush J."/>
            <person name="Wahlestedt C."/>
            <person name="Mattick J.S."/>
            <person name="Hume D.A."/>
            <person name="Kai C."/>
            <person name="Sasaki D."/>
            <person name="Tomaru Y."/>
            <person name="Fukuda S."/>
            <person name="Kanamori-Katayama M."/>
            <person name="Suzuki M."/>
            <person name="Aoki J."/>
            <person name="Arakawa T."/>
            <person name="Iida J."/>
            <person name="Imamura K."/>
            <person name="Itoh M."/>
            <person name="Kato T."/>
            <person name="Kawaji H."/>
            <person name="Kawagashira N."/>
            <person name="Kawashima T."/>
            <person name="Kojima M."/>
            <person name="Kondo S."/>
            <person name="Konno H."/>
            <person name="Nakano K."/>
            <person name="Ninomiya N."/>
            <person name="Nishio T."/>
            <person name="Okada M."/>
            <person name="Plessy C."/>
            <person name="Shibata K."/>
            <person name="Shiraki T."/>
            <person name="Suzuki S."/>
            <person name="Tagami M."/>
            <person name="Waki K."/>
            <person name="Watahiki A."/>
            <person name="Okamura-Oho Y."/>
            <person name="Suzuki H."/>
            <person name="Kawai J."/>
            <person name="Hayashizaki Y."/>
        </authorList>
    </citation>
    <scope>NUCLEOTIDE SEQUENCE [LARGE SCALE MRNA] (ISOFORMS 1 AND 3)</scope>
    <source>
        <strain>C57BL/6J</strain>
        <tissue>Medulla oblongata</tissue>
    </source>
</reference>
<reference key="3">
    <citation type="journal article" date="2004" name="Genome Res.">
        <title>The status, quality, and expansion of the NIH full-length cDNA project: the Mammalian Gene Collection (MGC).</title>
        <authorList>
            <consortium name="The MGC Project Team"/>
        </authorList>
    </citation>
    <scope>NUCLEOTIDE SEQUENCE [LARGE SCALE MRNA] (ISOFORM 2)</scope>
    <source>
        <strain>C57BL/6J</strain>
        <tissue>Brain</tissue>
        <tissue>Pancreas</tissue>
    </source>
</reference>
<reference key="4">
    <citation type="journal article" date="2010" name="Cell">
        <title>A tissue-specific atlas of mouse protein phosphorylation and expression.</title>
        <authorList>
            <person name="Huttlin E.L."/>
            <person name="Jedrychowski M.P."/>
            <person name="Elias J.E."/>
            <person name="Goswami T."/>
            <person name="Rad R."/>
            <person name="Beausoleil S.A."/>
            <person name="Villen J."/>
            <person name="Haas W."/>
            <person name="Sowa M.E."/>
            <person name="Gygi S.P."/>
        </authorList>
    </citation>
    <scope>PHOSPHORYLATION [LARGE SCALE ANALYSIS] AT THR-773</scope>
    <scope>IDENTIFICATION BY MASS SPECTROMETRY [LARGE SCALE ANALYSIS]</scope>
    <source>
        <tissue>Kidney</tissue>
        <tissue>Lung</tissue>
        <tissue>Spleen</tissue>
        <tissue>Testis</tissue>
    </source>
</reference>
<reference key="5">
    <citation type="journal article" date="2013" name="Mol. Cell">
        <title>SIRT5-mediated lysine desuccinylation impacts diverse metabolic pathways.</title>
        <authorList>
            <person name="Park J."/>
            <person name="Chen Y."/>
            <person name="Tishkoff D.X."/>
            <person name="Peng C."/>
            <person name="Tan M."/>
            <person name="Dai L."/>
            <person name="Xie Z."/>
            <person name="Zhang Y."/>
            <person name="Zwaans B.M."/>
            <person name="Skinner M.E."/>
            <person name="Lombard D.B."/>
            <person name="Zhao Y."/>
        </authorList>
    </citation>
    <scope>ACETYLATION [LARGE SCALE ANALYSIS] AT LYS-639 AND LYS-646</scope>
    <scope>IDENTIFICATION BY MASS SPECTROMETRY [LARGE SCALE ANALYSIS]</scope>
    <source>
        <tissue>Embryonic fibroblast</tissue>
    </source>
</reference>
<keyword id="KW-0007">Acetylation</keyword>
<keyword id="KW-0010">Activator</keyword>
<keyword id="KW-0025">Alternative splicing</keyword>
<keyword id="KW-0238">DNA-binding</keyword>
<keyword id="KW-0479">Metal-binding</keyword>
<keyword id="KW-0539">Nucleus</keyword>
<keyword id="KW-0597">Phosphoprotein</keyword>
<keyword id="KW-1185">Reference proteome</keyword>
<keyword id="KW-0677">Repeat</keyword>
<keyword id="KW-0804">Transcription</keyword>
<keyword id="KW-0805">Transcription regulation</keyword>
<keyword id="KW-0862">Zinc</keyword>
<keyword id="KW-0863">Zinc-finger</keyword>
<feature type="chain" id="PRO_0000197135" description="Transcriptional-regulating factor 1">
    <location>
        <begin position="1"/>
        <end position="1205"/>
    </location>
</feature>
<feature type="domain" description="ELM2" evidence="3">
    <location>
        <begin position="785"/>
        <end position="876"/>
    </location>
</feature>
<feature type="domain" description="SANT" evidence="4">
    <location>
        <begin position="891"/>
        <end position="942"/>
    </location>
</feature>
<feature type="zinc finger region" description="C2H2-type 1" evidence="2">
    <location>
        <begin position="512"/>
        <end position="534"/>
    </location>
</feature>
<feature type="zinc finger region" description="C2H2-type 2" evidence="2">
    <location>
        <begin position="1019"/>
        <end position="1043"/>
    </location>
</feature>
<feature type="zinc finger region" description="C2H2-type 3" evidence="2">
    <location>
        <begin position="1092"/>
        <end position="1114"/>
    </location>
</feature>
<feature type="region of interest" description="Disordered" evidence="5">
    <location>
        <begin position="201"/>
        <end position="226"/>
    </location>
</feature>
<feature type="region of interest" description="Disordered" evidence="5">
    <location>
        <begin position="270"/>
        <end position="317"/>
    </location>
</feature>
<feature type="region of interest" description="Disordered" evidence="5">
    <location>
        <begin position="332"/>
        <end position="351"/>
    </location>
</feature>
<feature type="region of interest" description="Disordered" evidence="5">
    <location>
        <begin position="390"/>
        <end position="500"/>
    </location>
</feature>
<feature type="region of interest" description="Disordered" evidence="5">
    <location>
        <begin position="527"/>
        <end position="583"/>
    </location>
</feature>
<feature type="region of interest" description="Disordered" evidence="5">
    <location>
        <begin position="601"/>
        <end position="629"/>
    </location>
</feature>
<feature type="region of interest" description="Disordered" evidence="5">
    <location>
        <begin position="956"/>
        <end position="1016"/>
    </location>
</feature>
<feature type="region of interest" description="Disordered" evidence="5">
    <location>
        <begin position="1043"/>
        <end position="1087"/>
    </location>
</feature>
<feature type="compositionally biased region" description="Low complexity" evidence="5">
    <location>
        <begin position="291"/>
        <end position="317"/>
    </location>
</feature>
<feature type="compositionally biased region" description="Low complexity" evidence="5">
    <location>
        <begin position="332"/>
        <end position="342"/>
    </location>
</feature>
<feature type="compositionally biased region" description="Polar residues" evidence="5">
    <location>
        <begin position="406"/>
        <end position="417"/>
    </location>
</feature>
<feature type="compositionally biased region" description="Polar residues" evidence="5">
    <location>
        <begin position="437"/>
        <end position="447"/>
    </location>
</feature>
<feature type="compositionally biased region" description="Polar residues" evidence="5">
    <location>
        <begin position="487"/>
        <end position="498"/>
    </location>
</feature>
<feature type="compositionally biased region" description="Pro residues" evidence="5">
    <location>
        <begin position="551"/>
        <end position="579"/>
    </location>
</feature>
<feature type="compositionally biased region" description="Polar residues" evidence="5">
    <location>
        <begin position="604"/>
        <end position="613"/>
    </location>
</feature>
<feature type="compositionally biased region" description="Acidic residues" evidence="5">
    <location>
        <begin position="956"/>
        <end position="975"/>
    </location>
</feature>
<feature type="compositionally biased region" description="Basic and acidic residues" evidence="5">
    <location>
        <begin position="976"/>
        <end position="990"/>
    </location>
</feature>
<feature type="compositionally biased region" description="Low complexity" evidence="5">
    <location>
        <begin position="1072"/>
        <end position="1086"/>
    </location>
</feature>
<feature type="modified residue" description="Phosphoserine" evidence="1">
    <location>
        <position position="490"/>
    </location>
</feature>
<feature type="modified residue" description="N6-acetyllysine" evidence="12">
    <location>
        <position position="639"/>
    </location>
</feature>
<feature type="modified residue" description="N6-acetyllysine" evidence="12">
    <location>
        <position position="646"/>
    </location>
</feature>
<feature type="modified residue" description="Phosphothreonine" evidence="11">
    <location>
        <position position="773"/>
    </location>
</feature>
<feature type="modified residue" description="Phosphothreonine" evidence="1">
    <location>
        <position position="960"/>
    </location>
</feature>
<feature type="modified residue" description="Phosphoserine" evidence="1">
    <location>
        <position position="961"/>
    </location>
</feature>
<feature type="splice variant" id="VSP_015647" description="In isoform 3 and isoform 4." evidence="7 9">
    <location>
        <position position="493"/>
    </location>
</feature>
<feature type="splice variant" id="VSP_015648" description="In isoform 3." evidence="9">
    <original>EEGEKAPPPQPQPQPQPQQP</original>
    <variation>VSREPAPSFPGHVLLALLCC</variation>
    <location>
        <begin position="546"/>
        <end position="565"/>
    </location>
</feature>
<feature type="splice variant" id="VSP_015649" description="In isoform 3." evidence="9">
    <location>
        <begin position="566"/>
        <end position="1205"/>
    </location>
</feature>
<feature type="splice variant" id="VSP_015650" description="In isoform 2." evidence="8">
    <original>L</original>
    <variation>LVRMTLSPPHSPQGAAPRAPA</variation>
    <location>
        <position position="634"/>
    </location>
</feature>
<feature type="splice variant" id="VSP_015651" description="In isoform 4." evidence="7">
    <original>A</original>
    <variation>ADCRCHVAPFLPQ</variation>
    <location>
        <position position="1028"/>
    </location>
</feature>
<feature type="sequence conflict" description="In Ref. 3; AAH59215." evidence="10" ref="3">
    <original>A</original>
    <variation>V</variation>
    <location>
        <position position="89"/>
    </location>
</feature>
<feature type="sequence conflict" description="In Ref. 1; AAN02288." evidence="10" ref="1">
    <original>T</original>
    <variation>P</variation>
    <location>
        <position position="112"/>
    </location>
</feature>
<feature type="sequence conflict" description="In Ref. 1; AAN02288." evidence="10" ref="1">
    <original>QQ</original>
    <variation>HR</variation>
    <location>
        <begin position="308"/>
        <end position="309"/>
    </location>
</feature>
<feature type="sequence conflict" description="In Ref. 1; AAN02288." evidence="10" ref="1">
    <original>QL</original>
    <variation>PA</variation>
    <location>
        <begin position="368"/>
        <end position="369"/>
    </location>
</feature>
<feature type="sequence conflict" description="In Ref. 1; AAN02288." evidence="10" ref="1">
    <original>S</original>
    <variation>T</variation>
    <location>
        <position position="464"/>
    </location>
</feature>
<feature type="sequence conflict" description="In Ref. 1; AAN02288." evidence="10" ref="1">
    <original>K</original>
    <variation>E</variation>
    <location>
        <position position="659"/>
    </location>
</feature>
<feature type="sequence conflict" description="In Ref. 1; AAN02288." evidence="10" ref="1">
    <original>F</original>
    <variation>L</variation>
    <location>
        <position position="915"/>
    </location>
</feature>
<feature type="sequence conflict" description="In Ref. 1; AAN02288." evidence="10" ref="1">
    <original>M</original>
    <variation>I</variation>
    <location>
        <position position="1159"/>
    </location>
</feature>
<feature type="sequence conflict" description="In Ref. 1; AAN02288." evidence="10" ref="1">
    <original>D</original>
    <variation>V</variation>
    <location>
        <position position="1202"/>
    </location>
</feature>
<sequence length="1205" mass="132402">MGDQQLYKTNHVGHGGENLFYQQPPLGVHSGLGHSYGNTISGAGMDAPQASPISPHFPQDTRDGLGLPIGSKNLGQMDTSRQGGWGSHAGPGNHVQLRSNLANSNMMWGTPTQVEPADGYQYTYSQASEIRTQKLTSGVLHKLDSFTQVFANQNLRIQVNNMAQVLHTQSAVMDGASDSALRQLLSQKPVEPSASAIASRYQQVPQQPHPGFTGGLPKPALPVGQHAPQGHLYYDYQQPLAQMSMQGGQPLQAPQVLSGHMQQLQQHQYYPQPPPQQQQAGLQRISVQEMQQQQQPQQIRPSPPQQQQQLQLQQRQSSLQIPQYYQPQPMMQHLQEQQQPSMHLQPPSYHRDPHQYTPEQAHAVQLIQLGSMPQYYYQEPQQAYSHPLYPQSHLSQHQQREDGQLKTYSSDRQTPAMLSSHGDMGTSDTGVADPASSEMTRVTSTLPHQPLLSPSGIHLNNMGSQHQQPPSPSAMWPQMHLPDGRAQSGSPESSSGQTKGVFGEQFDAKNKLTCSICLKEFKSLPALNGHMRSHGGMRASPSLKQEEGEKAPPPQPQPQPQPQQPLPPPPPPPPPPQLPPEAERLTPMVMPVSVPVKLIPPKPSSQGFTNSVAATPAARDKPASSMSDDEMPVLEIPRKHPPIAAKVEEPLKNLPEKKKFRHRPEPLFIPPPPSSYTPNPTSYSGATLYQSQLRSPRILGDHLLLDPAHELPPYTPPPMLSPVRQGSGLFSNVLISGHGPGVHPQLPLTPLTPTPRVLLCRSSSIDGSNVTVTPGPGEQTVDVEPRINIGLRFQAEIPELQDVSALAQDTHRATLVWKPWPELENQALQQQVENLLNLCCSSALPGGGTNSEFALHSLFEAKGDVMATLEMLLLRKPVRLKCHPLANYHYAGSDKWTSLERKLFNKALATYSKDFIFVQKMVKSKTVAQCVEYYYTWKKIMRLGRKHRTRLAEIIDDCMTSEEEEEAEEEEEDPEEDRKSIKEEESEVAKSPEPPPAPALAPTEGPPMQAVGQQPSGNFICEMPNCGAVFSSRQALNGHARIHGGTNQVAKTRGAIPSGKQKPGGTQSGYCSVKSSPSHSTTSGETDPTTIFPCKECGKVFFKIKSRNAHMKTHRQQEEQQRQKAQKAAFAAEMAATIERTTGPVGAPELLPLDQLSLMKPVKDVDILDDDVVQQLGVMDEAEVVGTDLLLDDQDSVLLQGDTEL</sequence>
<proteinExistence type="evidence at protein level"/>
<comment type="function">
    <text evidence="1">Binds DNA and activates transcription of CYP11A1. Interaction with CREBBP and EP300 results in a synergistic transcriptional activation of CYP11A1.</text>
</comment>
<comment type="subunit">
    <text evidence="1">Interacts with CREBBP and EP300. Interacts with DNTTIP1 and DNTT.</text>
</comment>
<comment type="subcellular location">
    <subcellularLocation>
        <location evidence="3 4">Nucleus</location>
    </subcellularLocation>
</comment>
<comment type="alternative products">
    <event type="alternative splicing"/>
    <isoform>
        <id>Q8BXJ2-1</id>
        <name>1</name>
        <sequence type="displayed"/>
    </isoform>
    <isoform>
        <id>Q8BXJ2-2</id>
        <name>2</name>
        <sequence type="described" ref="VSP_015650"/>
    </isoform>
    <isoform>
        <id>Q8BXJ2-3</id>
        <name>3</name>
        <sequence type="described" ref="VSP_015647 VSP_015648 VSP_015649"/>
    </isoform>
    <isoform>
        <id>Q8BXJ2-4</id>
        <name>4</name>
        <sequence type="described" ref="VSP_015647 VSP_015651"/>
    </isoform>
</comment>
<comment type="tissue specificity">
    <text evidence="6">Highly expressed in kidney, lung and brain. In the brain, expression was seen in the basal ganglia, hippocampus, piriform cortex, cerebral cortex, ventromedial nucleus of the hypothalamus and the dorsal and superior central nuclei of the raphe.</text>
</comment>
<comment type="developmental stage">
    <text evidence="6">At 15.5 dpc, highly expressed in brain, lung, adrenal, thymus and kidney. Expression was also seen in spinal cord, retina and snout.</text>
</comment>
<comment type="sequence caution" evidence="10">
    <conflict type="frameshift">
        <sequence resource="EMBL-CDS" id="AAN02288"/>
    </conflict>
</comment>
<protein>
    <recommendedName>
        <fullName>Transcriptional-regulating factor 1</fullName>
    </recommendedName>
    <alternativeName>
        <fullName>Transcriptional-regulating protein 132</fullName>
    </alternativeName>
    <alternativeName>
        <fullName>Zinc finger transcription factor TReP-132</fullName>
    </alternativeName>
</protein>
<evidence type="ECO:0000250" key="1">
    <source>
        <dbReference type="UniProtKB" id="Q96PN7"/>
    </source>
</evidence>
<evidence type="ECO:0000255" key="2">
    <source>
        <dbReference type="PROSITE-ProRule" id="PRU00042"/>
    </source>
</evidence>
<evidence type="ECO:0000255" key="3">
    <source>
        <dbReference type="PROSITE-ProRule" id="PRU00512"/>
    </source>
</evidence>
<evidence type="ECO:0000255" key="4">
    <source>
        <dbReference type="PROSITE-ProRule" id="PRU00624"/>
    </source>
</evidence>
<evidence type="ECO:0000256" key="5">
    <source>
        <dbReference type="SAM" id="MobiDB-lite"/>
    </source>
</evidence>
<evidence type="ECO:0000269" key="6">
    <source>
    </source>
</evidence>
<evidence type="ECO:0000303" key="7">
    <source>
    </source>
</evidence>
<evidence type="ECO:0000303" key="8">
    <source>
    </source>
</evidence>
<evidence type="ECO:0000303" key="9">
    <source>
    </source>
</evidence>
<evidence type="ECO:0000305" key="10"/>
<evidence type="ECO:0007744" key="11">
    <source>
    </source>
</evidence>
<evidence type="ECO:0007744" key="12">
    <source>
    </source>
</evidence>
<gene>
    <name type="primary">Trerf1</name>
</gene>
<organism>
    <name type="scientific">Mus musculus</name>
    <name type="common">Mouse</name>
    <dbReference type="NCBI Taxonomy" id="10090"/>
    <lineage>
        <taxon>Eukaryota</taxon>
        <taxon>Metazoa</taxon>
        <taxon>Chordata</taxon>
        <taxon>Craniata</taxon>
        <taxon>Vertebrata</taxon>
        <taxon>Euteleostomi</taxon>
        <taxon>Mammalia</taxon>
        <taxon>Eutheria</taxon>
        <taxon>Euarchontoglires</taxon>
        <taxon>Glires</taxon>
        <taxon>Rodentia</taxon>
        <taxon>Myomorpha</taxon>
        <taxon>Muroidea</taxon>
        <taxon>Muridae</taxon>
        <taxon>Murinae</taxon>
        <taxon>Mus</taxon>
        <taxon>Mus</taxon>
    </lineage>
</organism>
<accession>Q8BXJ2</accession>
<accession>Q32NY5</accession>
<accession>Q6PCQ4</accession>
<accession>Q80X25</accession>
<accession>Q810H8</accession>
<accession>Q8BY31</accession>